<protein>
    <recommendedName>
        <fullName evidence="1">tRNA/tmRNA (uracil-C(5))-methyltransferase</fullName>
        <ecNumber evidence="1">2.1.1.-</ecNumber>
        <ecNumber evidence="1">2.1.1.35</ecNumber>
    </recommendedName>
    <alternativeName>
        <fullName evidence="1">tRNA (uracil(54)-C(5))-methyltransferase</fullName>
    </alternativeName>
    <alternativeName>
        <fullName evidence="1">tRNA(m5U54)-methyltransferase</fullName>
        <shortName evidence="1">RUMT</shortName>
    </alternativeName>
    <alternativeName>
        <fullName evidence="1">tmRNA (uracil(341)-C(5))-methyltransferase</fullName>
    </alternativeName>
</protein>
<name>TRMA_SHEAM</name>
<sequence length="365" mass="41849">MNAQAMDPQQYEQQLEQKCQALTEAFAHYNPPALEVFPSAPAHYRMRCEFRVWHDGDDLYYCMFDNVAKEKVRTDQFLPASELINRMMPALLDELRPNRALRHKLFQVDFLSTLSGEILVSLLYHRQLDDQWLTEARALKARLGEHFKVDIIGRARKQKFVLDRDFVVESLDVDGKTLHYKQVENSFTQPNAGVAVKMLEWALDATKQSSGDLLELYCGNGNFSIALAPNFGKVLATELAKPSVEAAQYNIQVNKVSNLDIVRMSAEEFTEAMKGEKRFNRLGDIDLQSYQCNTIFVDPPRAGLDDETVKLVQGYENILYISCNPDTLNDNLKVLSETHEVVRFALFDQFPYTHHTEAGVMLKRR</sequence>
<gene>
    <name evidence="1" type="primary">trmA</name>
    <name type="ordered locus">Sama_0193</name>
</gene>
<comment type="function">
    <text evidence="1">Dual-specificity methyltransferase that catalyzes the formation of 5-methyluridine at position 54 (m5U54) in all tRNAs, and that of position 341 (m5U341) in tmRNA (transfer-mRNA).</text>
</comment>
<comment type="catalytic activity">
    <reaction evidence="1">
        <text>uridine(54) in tRNA + S-adenosyl-L-methionine = 5-methyluridine(54) in tRNA + S-adenosyl-L-homocysteine + H(+)</text>
        <dbReference type="Rhea" id="RHEA:42712"/>
        <dbReference type="Rhea" id="RHEA-COMP:10167"/>
        <dbReference type="Rhea" id="RHEA-COMP:10193"/>
        <dbReference type="ChEBI" id="CHEBI:15378"/>
        <dbReference type="ChEBI" id="CHEBI:57856"/>
        <dbReference type="ChEBI" id="CHEBI:59789"/>
        <dbReference type="ChEBI" id="CHEBI:65315"/>
        <dbReference type="ChEBI" id="CHEBI:74447"/>
        <dbReference type="EC" id="2.1.1.35"/>
    </reaction>
</comment>
<comment type="catalytic activity">
    <reaction evidence="1">
        <text>uridine(341) in tmRNA + S-adenosyl-L-methionine = 5-methyluridine(341) in tmRNA + S-adenosyl-L-homocysteine + H(+)</text>
        <dbReference type="Rhea" id="RHEA:43612"/>
        <dbReference type="Rhea" id="RHEA-COMP:10630"/>
        <dbReference type="Rhea" id="RHEA-COMP:10631"/>
        <dbReference type="ChEBI" id="CHEBI:15378"/>
        <dbReference type="ChEBI" id="CHEBI:57856"/>
        <dbReference type="ChEBI" id="CHEBI:59789"/>
        <dbReference type="ChEBI" id="CHEBI:65315"/>
        <dbReference type="ChEBI" id="CHEBI:74447"/>
    </reaction>
</comment>
<comment type="similarity">
    <text evidence="1">Belongs to the class I-like SAM-binding methyltransferase superfamily. RNA M5U methyltransferase family. TrmA subfamily.</text>
</comment>
<dbReference type="EC" id="2.1.1.-" evidence="1"/>
<dbReference type="EC" id="2.1.1.35" evidence="1"/>
<dbReference type="EMBL" id="CP000507">
    <property type="protein sequence ID" value="ABL98404.1"/>
    <property type="molecule type" value="Genomic_DNA"/>
</dbReference>
<dbReference type="RefSeq" id="WP_011758315.1">
    <property type="nucleotide sequence ID" value="NC_008700.1"/>
</dbReference>
<dbReference type="SMR" id="A1S1Z8"/>
<dbReference type="STRING" id="326297.Sama_0193"/>
<dbReference type="KEGG" id="saz:Sama_0193"/>
<dbReference type="eggNOG" id="COG2265">
    <property type="taxonomic scope" value="Bacteria"/>
</dbReference>
<dbReference type="HOGENOM" id="CLU_043022_0_0_6"/>
<dbReference type="OrthoDB" id="9804590at2"/>
<dbReference type="Proteomes" id="UP000009175">
    <property type="component" value="Chromosome"/>
</dbReference>
<dbReference type="GO" id="GO:0005829">
    <property type="term" value="C:cytosol"/>
    <property type="evidence" value="ECO:0007669"/>
    <property type="project" value="TreeGrafter"/>
</dbReference>
<dbReference type="GO" id="GO:0019843">
    <property type="term" value="F:rRNA binding"/>
    <property type="evidence" value="ECO:0007669"/>
    <property type="project" value="TreeGrafter"/>
</dbReference>
<dbReference type="GO" id="GO:0030697">
    <property type="term" value="F:tRNA (uracil(54)-C5)-methyltransferase activity, S-adenosyl methionine-dependent"/>
    <property type="evidence" value="ECO:0007669"/>
    <property type="project" value="UniProtKB-UniRule"/>
</dbReference>
<dbReference type="GO" id="GO:0000049">
    <property type="term" value="F:tRNA binding"/>
    <property type="evidence" value="ECO:0007669"/>
    <property type="project" value="TreeGrafter"/>
</dbReference>
<dbReference type="GO" id="GO:0030488">
    <property type="term" value="P:tRNA methylation"/>
    <property type="evidence" value="ECO:0007669"/>
    <property type="project" value="UniProtKB-UniRule"/>
</dbReference>
<dbReference type="CDD" id="cd02440">
    <property type="entry name" value="AdoMet_MTases"/>
    <property type="match status" value="1"/>
</dbReference>
<dbReference type="FunFam" id="2.40.50.1070:FF:000001">
    <property type="entry name" value="tRNA/tmRNA (uracil-C(5))-methyltransferase"/>
    <property type="match status" value="1"/>
</dbReference>
<dbReference type="FunFam" id="3.40.50.150:FF:000012">
    <property type="entry name" value="tRNA/tmRNA (uracil-C(5))-methyltransferase"/>
    <property type="match status" value="1"/>
</dbReference>
<dbReference type="Gene3D" id="2.40.50.1070">
    <property type="match status" value="1"/>
</dbReference>
<dbReference type="Gene3D" id="3.40.50.150">
    <property type="entry name" value="Vaccinia Virus protein VP39"/>
    <property type="match status" value="1"/>
</dbReference>
<dbReference type="HAMAP" id="MF_01011">
    <property type="entry name" value="RNA_methyltr_TrmA"/>
    <property type="match status" value="1"/>
</dbReference>
<dbReference type="InterPro" id="IPR030390">
    <property type="entry name" value="MeTrfase_TrmA_AS"/>
</dbReference>
<dbReference type="InterPro" id="IPR030391">
    <property type="entry name" value="MeTrfase_TrmA_CS"/>
</dbReference>
<dbReference type="InterPro" id="IPR029063">
    <property type="entry name" value="SAM-dependent_MTases_sf"/>
</dbReference>
<dbReference type="InterPro" id="IPR011869">
    <property type="entry name" value="TrmA_MeTrfase"/>
</dbReference>
<dbReference type="InterPro" id="IPR010280">
    <property type="entry name" value="U5_MeTrfase_fam"/>
</dbReference>
<dbReference type="NCBIfam" id="TIGR02143">
    <property type="entry name" value="trmA_only"/>
    <property type="match status" value="1"/>
</dbReference>
<dbReference type="PANTHER" id="PTHR47790">
    <property type="entry name" value="TRNA/TMRNA (URACIL-C(5))-METHYLTRANSFERASE"/>
    <property type="match status" value="1"/>
</dbReference>
<dbReference type="PANTHER" id="PTHR47790:SF2">
    <property type="entry name" value="TRNA_TMRNA (URACIL-C(5))-METHYLTRANSFERASE"/>
    <property type="match status" value="1"/>
</dbReference>
<dbReference type="Pfam" id="PF05958">
    <property type="entry name" value="tRNA_U5-meth_tr"/>
    <property type="match status" value="1"/>
</dbReference>
<dbReference type="SUPFAM" id="SSF53335">
    <property type="entry name" value="S-adenosyl-L-methionine-dependent methyltransferases"/>
    <property type="match status" value="1"/>
</dbReference>
<dbReference type="PROSITE" id="PS51687">
    <property type="entry name" value="SAM_MT_RNA_M5U"/>
    <property type="match status" value="1"/>
</dbReference>
<dbReference type="PROSITE" id="PS01230">
    <property type="entry name" value="TRMA_1"/>
    <property type="match status" value="1"/>
</dbReference>
<dbReference type="PROSITE" id="PS01231">
    <property type="entry name" value="TRMA_2"/>
    <property type="match status" value="1"/>
</dbReference>
<accession>A1S1Z8</accession>
<evidence type="ECO:0000255" key="1">
    <source>
        <dbReference type="HAMAP-Rule" id="MF_01011"/>
    </source>
</evidence>
<keyword id="KW-0489">Methyltransferase</keyword>
<keyword id="KW-1185">Reference proteome</keyword>
<keyword id="KW-0949">S-adenosyl-L-methionine</keyword>
<keyword id="KW-0808">Transferase</keyword>
<keyword id="KW-0819">tRNA processing</keyword>
<feature type="chain" id="PRO_0000388565" description="tRNA/tmRNA (uracil-C(5))-methyltransferase">
    <location>
        <begin position="1"/>
        <end position="365"/>
    </location>
</feature>
<feature type="active site" description="Nucleophile" evidence="1">
    <location>
        <position position="323"/>
    </location>
</feature>
<feature type="active site" description="Proton acceptor" evidence="1">
    <location>
        <position position="357"/>
    </location>
</feature>
<feature type="binding site" evidence="1">
    <location>
        <position position="189"/>
    </location>
    <ligand>
        <name>S-adenosyl-L-methionine</name>
        <dbReference type="ChEBI" id="CHEBI:59789"/>
    </ligand>
</feature>
<feature type="binding site" evidence="1">
    <location>
        <position position="217"/>
    </location>
    <ligand>
        <name>S-adenosyl-L-methionine</name>
        <dbReference type="ChEBI" id="CHEBI:59789"/>
    </ligand>
</feature>
<feature type="binding site" evidence="1">
    <location>
        <position position="222"/>
    </location>
    <ligand>
        <name>S-adenosyl-L-methionine</name>
        <dbReference type="ChEBI" id="CHEBI:59789"/>
    </ligand>
</feature>
<feature type="binding site" evidence="1">
    <location>
        <position position="238"/>
    </location>
    <ligand>
        <name>S-adenosyl-L-methionine</name>
        <dbReference type="ChEBI" id="CHEBI:59789"/>
    </ligand>
</feature>
<feature type="binding site" evidence="1">
    <location>
        <position position="298"/>
    </location>
    <ligand>
        <name>S-adenosyl-L-methionine</name>
        <dbReference type="ChEBI" id="CHEBI:59789"/>
    </ligand>
</feature>
<reference key="1">
    <citation type="submission" date="2006-12" db="EMBL/GenBank/DDBJ databases">
        <title>Complete sequence of Shewanella amazonensis SB2B.</title>
        <authorList>
            <consortium name="US DOE Joint Genome Institute"/>
            <person name="Copeland A."/>
            <person name="Lucas S."/>
            <person name="Lapidus A."/>
            <person name="Barry K."/>
            <person name="Detter J.C."/>
            <person name="Glavina del Rio T."/>
            <person name="Hammon N."/>
            <person name="Israni S."/>
            <person name="Dalin E."/>
            <person name="Tice H."/>
            <person name="Pitluck S."/>
            <person name="Munk A.C."/>
            <person name="Brettin T."/>
            <person name="Bruce D."/>
            <person name="Han C."/>
            <person name="Tapia R."/>
            <person name="Gilna P."/>
            <person name="Schmutz J."/>
            <person name="Larimer F."/>
            <person name="Land M."/>
            <person name="Hauser L."/>
            <person name="Kyrpides N."/>
            <person name="Mikhailova N."/>
            <person name="Fredrickson J."/>
            <person name="Richardson P."/>
        </authorList>
    </citation>
    <scope>NUCLEOTIDE SEQUENCE [LARGE SCALE GENOMIC DNA]</scope>
    <source>
        <strain>ATCC BAA-1098 / SB2B</strain>
    </source>
</reference>
<organism>
    <name type="scientific">Shewanella amazonensis (strain ATCC BAA-1098 / SB2B)</name>
    <dbReference type="NCBI Taxonomy" id="326297"/>
    <lineage>
        <taxon>Bacteria</taxon>
        <taxon>Pseudomonadati</taxon>
        <taxon>Pseudomonadota</taxon>
        <taxon>Gammaproteobacteria</taxon>
        <taxon>Alteromonadales</taxon>
        <taxon>Shewanellaceae</taxon>
        <taxon>Shewanella</taxon>
    </lineage>
</organism>
<proteinExistence type="inferred from homology"/>